<name>NDK_VARPS</name>
<protein>
    <recommendedName>
        <fullName evidence="1">Nucleoside diphosphate kinase</fullName>
        <shortName evidence="1">NDK</shortName>
        <shortName evidence="1">NDP kinase</shortName>
        <ecNumber evidence="1">2.7.4.6</ecNumber>
    </recommendedName>
    <alternativeName>
        <fullName evidence="1">Nucleoside-2-P kinase</fullName>
    </alternativeName>
</protein>
<accession>C5CXG2</accession>
<evidence type="ECO:0000255" key="1">
    <source>
        <dbReference type="HAMAP-Rule" id="MF_00451"/>
    </source>
</evidence>
<dbReference type="EC" id="2.7.4.6" evidence="1"/>
<dbReference type="EMBL" id="CP001635">
    <property type="protein sequence ID" value="ACS18818.1"/>
    <property type="molecule type" value="Genomic_DNA"/>
</dbReference>
<dbReference type="SMR" id="C5CXG2"/>
<dbReference type="STRING" id="543728.Vapar_2183"/>
<dbReference type="KEGG" id="vap:Vapar_2183"/>
<dbReference type="eggNOG" id="COG0105">
    <property type="taxonomic scope" value="Bacteria"/>
</dbReference>
<dbReference type="HOGENOM" id="CLU_060216_8_1_4"/>
<dbReference type="OrthoDB" id="9801161at2"/>
<dbReference type="GO" id="GO:0005737">
    <property type="term" value="C:cytoplasm"/>
    <property type="evidence" value="ECO:0007669"/>
    <property type="project" value="UniProtKB-SubCell"/>
</dbReference>
<dbReference type="GO" id="GO:0005524">
    <property type="term" value="F:ATP binding"/>
    <property type="evidence" value="ECO:0007669"/>
    <property type="project" value="UniProtKB-UniRule"/>
</dbReference>
<dbReference type="GO" id="GO:0046872">
    <property type="term" value="F:metal ion binding"/>
    <property type="evidence" value="ECO:0007669"/>
    <property type="project" value="UniProtKB-KW"/>
</dbReference>
<dbReference type="GO" id="GO:0004550">
    <property type="term" value="F:nucleoside diphosphate kinase activity"/>
    <property type="evidence" value="ECO:0007669"/>
    <property type="project" value="UniProtKB-UniRule"/>
</dbReference>
<dbReference type="GO" id="GO:0006241">
    <property type="term" value="P:CTP biosynthetic process"/>
    <property type="evidence" value="ECO:0007669"/>
    <property type="project" value="UniProtKB-UniRule"/>
</dbReference>
<dbReference type="GO" id="GO:0006183">
    <property type="term" value="P:GTP biosynthetic process"/>
    <property type="evidence" value="ECO:0007669"/>
    <property type="project" value="UniProtKB-UniRule"/>
</dbReference>
<dbReference type="GO" id="GO:0006228">
    <property type="term" value="P:UTP biosynthetic process"/>
    <property type="evidence" value="ECO:0007669"/>
    <property type="project" value="UniProtKB-UniRule"/>
</dbReference>
<dbReference type="CDD" id="cd04413">
    <property type="entry name" value="NDPk_I"/>
    <property type="match status" value="1"/>
</dbReference>
<dbReference type="FunFam" id="3.30.70.141:FF:000001">
    <property type="entry name" value="Nucleoside diphosphate kinase"/>
    <property type="match status" value="1"/>
</dbReference>
<dbReference type="Gene3D" id="3.30.70.141">
    <property type="entry name" value="Nucleoside diphosphate kinase-like domain"/>
    <property type="match status" value="1"/>
</dbReference>
<dbReference type="HAMAP" id="MF_00451">
    <property type="entry name" value="NDP_kinase"/>
    <property type="match status" value="1"/>
</dbReference>
<dbReference type="InterPro" id="IPR034907">
    <property type="entry name" value="NDK-like_dom"/>
</dbReference>
<dbReference type="InterPro" id="IPR036850">
    <property type="entry name" value="NDK-like_dom_sf"/>
</dbReference>
<dbReference type="InterPro" id="IPR001564">
    <property type="entry name" value="Nucleoside_diP_kinase"/>
</dbReference>
<dbReference type="InterPro" id="IPR023005">
    <property type="entry name" value="Nucleoside_diP_kinase_AS"/>
</dbReference>
<dbReference type="NCBIfam" id="NF001908">
    <property type="entry name" value="PRK00668.1"/>
    <property type="match status" value="1"/>
</dbReference>
<dbReference type="PANTHER" id="PTHR46161">
    <property type="entry name" value="NUCLEOSIDE DIPHOSPHATE KINASE"/>
    <property type="match status" value="1"/>
</dbReference>
<dbReference type="PANTHER" id="PTHR46161:SF3">
    <property type="entry name" value="NUCLEOSIDE DIPHOSPHATE KINASE DDB_G0292928-RELATED"/>
    <property type="match status" value="1"/>
</dbReference>
<dbReference type="Pfam" id="PF00334">
    <property type="entry name" value="NDK"/>
    <property type="match status" value="1"/>
</dbReference>
<dbReference type="PRINTS" id="PR01243">
    <property type="entry name" value="NUCDPKINASE"/>
</dbReference>
<dbReference type="SMART" id="SM00562">
    <property type="entry name" value="NDK"/>
    <property type="match status" value="1"/>
</dbReference>
<dbReference type="SUPFAM" id="SSF54919">
    <property type="entry name" value="Nucleoside diphosphate kinase, NDK"/>
    <property type="match status" value="1"/>
</dbReference>
<dbReference type="PROSITE" id="PS00469">
    <property type="entry name" value="NDPK"/>
    <property type="match status" value="1"/>
</dbReference>
<dbReference type="PROSITE" id="PS51374">
    <property type="entry name" value="NDPK_LIKE"/>
    <property type="match status" value="1"/>
</dbReference>
<keyword id="KW-0067">ATP-binding</keyword>
<keyword id="KW-0963">Cytoplasm</keyword>
<keyword id="KW-0418">Kinase</keyword>
<keyword id="KW-0460">Magnesium</keyword>
<keyword id="KW-0479">Metal-binding</keyword>
<keyword id="KW-0546">Nucleotide metabolism</keyword>
<keyword id="KW-0547">Nucleotide-binding</keyword>
<keyword id="KW-0597">Phosphoprotein</keyword>
<keyword id="KW-0808">Transferase</keyword>
<gene>
    <name evidence="1" type="primary">ndk</name>
    <name type="ordered locus">Vapar_2183</name>
</gene>
<proteinExistence type="inferred from homology"/>
<reference key="1">
    <citation type="journal article" date="2011" name="J. Bacteriol.">
        <title>Complete genome sequence of the metabolically versatile plant growth-promoting endophyte, Variovorax paradoxus S110.</title>
        <authorList>
            <person name="Han J.I."/>
            <person name="Choi H.K."/>
            <person name="Lee S.W."/>
            <person name="Orwin P.M."/>
            <person name="Kim J."/>
            <person name="Laroe S.L."/>
            <person name="Kim T.G."/>
            <person name="O'Neil J."/>
            <person name="Leadbetter J.R."/>
            <person name="Lee S.Y."/>
            <person name="Hur C.G."/>
            <person name="Spain J.C."/>
            <person name="Ovchinnikova G."/>
            <person name="Goodwin L."/>
            <person name="Han C."/>
        </authorList>
    </citation>
    <scope>NUCLEOTIDE SEQUENCE [LARGE SCALE GENOMIC DNA]</scope>
    <source>
        <strain>S110</strain>
    </source>
</reference>
<feature type="chain" id="PRO_1000206231" description="Nucleoside diphosphate kinase">
    <location>
        <begin position="1"/>
        <end position="141"/>
    </location>
</feature>
<feature type="active site" description="Pros-phosphohistidine intermediate" evidence="1">
    <location>
        <position position="117"/>
    </location>
</feature>
<feature type="binding site" evidence="1">
    <location>
        <position position="11"/>
    </location>
    <ligand>
        <name>ATP</name>
        <dbReference type="ChEBI" id="CHEBI:30616"/>
    </ligand>
</feature>
<feature type="binding site" evidence="1">
    <location>
        <position position="59"/>
    </location>
    <ligand>
        <name>ATP</name>
        <dbReference type="ChEBI" id="CHEBI:30616"/>
    </ligand>
</feature>
<feature type="binding site" evidence="1">
    <location>
        <position position="87"/>
    </location>
    <ligand>
        <name>ATP</name>
        <dbReference type="ChEBI" id="CHEBI:30616"/>
    </ligand>
</feature>
<feature type="binding site" evidence="1">
    <location>
        <position position="93"/>
    </location>
    <ligand>
        <name>ATP</name>
        <dbReference type="ChEBI" id="CHEBI:30616"/>
    </ligand>
</feature>
<feature type="binding site" evidence="1">
    <location>
        <position position="104"/>
    </location>
    <ligand>
        <name>ATP</name>
        <dbReference type="ChEBI" id="CHEBI:30616"/>
    </ligand>
</feature>
<feature type="binding site" evidence="1">
    <location>
        <position position="114"/>
    </location>
    <ligand>
        <name>ATP</name>
        <dbReference type="ChEBI" id="CHEBI:30616"/>
    </ligand>
</feature>
<organism>
    <name type="scientific">Variovorax paradoxus (strain S110)</name>
    <dbReference type="NCBI Taxonomy" id="543728"/>
    <lineage>
        <taxon>Bacteria</taxon>
        <taxon>Pseudomonadati</taxon>
        <taxon>Pseudomonadota</taxon>
        <taxon>Betaproteobacteria</taxon>
        <taxon>Burkholderiales</taxon>
        <taxon>Comamonadaceae</taxon>
        <taxon>Variovorax</taxon>
    </lineage>
</organism>
<sequence>MAIERTLSIIKPDAVAKNVIGKIVSRFEAAGLKIVAAKLVHLSRNEAEQFYSVHKERPFFKDLVDFMISGPVFVQVLEGENAIAKNRDLMGATDPKKAAPGTIRADFADSIDANAVHGSDAPETAANEVAFFFAGLNVYAR</sequence>
<comment type="function">
    <text evidence="1">Major role in the synthesis of nucleoside triphosphates other than ATP. The ATP gamma phosphate is transferred to the NDP beta phosphate via a ping-pong mechanism, using a phosphorylated active-site intermediate.</text>
</comment>
<comment type="catalytic activity">
    <reaction evidence="1">
        <text>a 2'-deoxyribonucleoside 5'-diphosphate + ATP = a 2'-deoxyribonucleoside 5'-triphosphate + ADP</text>
        <dbReference type="Rhea" id="RHEA:44640"/>
        <dbReference type="ChEBI" id="CHEBI:30616"/>
        <dbReference type="ChEBI" id="CHEBI:61560"/>
        <dbReference type="ChEBI" id="CHEBI:73316"/>
        <dbReference type="ChEBI" id="CHEBI:456216"/>
        <dbReference type="EC" id="2.7.4.6"/>
    </reaction>
</comment>
<comment type="catalytic activity">
    <reaction evidence="1">
        <text>a ribonucleoside 5'-diphosphate + ATP = a ribonucleoside 5'-triphosphate + ADP</text>
        <dbReference type="Rhea" id="RHEA:18113"/>
        <dbReference type="ChEBI" id="CHEBI:30616"/>
        <dbReference type="ChEBI" id="CHEBI:57930"/>
        <dbReference type="ChEBI" id="CHEBI:61557"/>
        <dbReference type="ChEBI" id="CHEBI:456216"/>
        <dbReference type="EC" id="2.7.4.6"/>
    </reaction>
</comment>
<comment type="cofactor">
    <cofactor evidence="1">
        <name>Mg(2+)</name>
        <dbReference type="ChEBI" id="CHEBI:18420"/>
    </cofactor>
</comment>
<comment type="subunit">
    <text evidence="1">Homotetramer.</text>
</comment>
<comment type="subcellular location">
    <subcellularLocation>
        <location evidence="1">Cytoplasm</location>
    </subcellularLocation>
</comment>
<comment type="similarity">
    <text evidence="1">Belongs to the NDK family.</text>
</comment>